<accession>Q6PFQ0</accession>
<keyword id="KW-0067">ATP-binding</keyword>
<keyword id="KW-0418">Kinase</keyword>
<keyword id="KW-0460">Magnesium</keyword>
<keyword id="KW-0479">Metal-binding</keyword>
<keyword id="KW-0547">Nucleotide-binding</keyword>
<keyword id="KW-0597">Phosphoprotein</keyword>
<keyword id="KW-1185">Reference proteome</keyword>
<keyword id="KW-0677">Repeat</keyword>
<keyword id="KW-0723">Serine/threonine-protein kinase</keyword>
<keyword id="KW-0808">Transferase</keyword>
<protein>
    <recommendedName>
        <fullName>Ribosomal protein S6 kinase alpha-6</fullName>
        <shortName>S6K-alpha-6</shortName>
        <ecNumber>2.7.11.1</ecNumber>
    </recommendedName>
    <alternativeName>
        <fullName>S6K-alpha 6-like</fullName>
    </alternativeName>
</protein>
<evidence type="ECO:0000250" key="1"/>
<evidence type="ECO:0000255" key="2">
    <source>
        <dbReference type="PROSITE-ProRule" id="PRU00159"/>
    </source>
</evidence>
<evidence type="ECO:0000255" key="3">
    <source>
        <dbReference type="PROSITE-ProRule" id="PRU00618"/>
    </source>
</evidence>
<evidence type="ECO:0000305" key="4"/>
<proteinExistence type="evidence at transcript level"/>
<dbReference type="EC" id="2.7.11.1"/>
<dbReference type="EMBL" id="BC057467">
    <property type="protein sequence ID" value="AAH57467.1"/>
    <property type="molecule type" value="mRNA"/>
</dbReference>
<dbReference type="RefSeq" id="NP_956367.1">
    <property type="nucleotide sequence ID" value="NM_200073.1"/>
</dbReference>
<dbReference type="SMR" id="Q6PFQ0"/>
<dbReference type="FunCoup" id="Q6PFQ0">
    <property type="interactions" value="1197"/>
</dbReference>
<dbReference type="STRING" id="7955.ENSDARP00000130163"/>
<dbReference type="GeneID" id="337670"/>
<dbReference type="KEGG" id="dre:337670"/>
<dbReference type="AGR" id="ZFIN:ZDB-GENE-030131-9616"/>
<dbReference type="CTD" id="337670"/>
<dbReference type="ZFIN" id="ZDB-GENE-030131-9616">
    <property type="gene designation" value="rps6kal"/>
</dbReference>
<dbReference type="InParanoid" id="Q6PFQ0"/>
<dbReference type="OrthoDB" id="63267at2759"/>
<dbReference type="PhylomeDB" id="Q6PFQ0"/>
<dbReference type="PRO" id="PR:Q6PFQ0"/>
<dbReference type="Proteomes" id="UP000000437">
    <property type="component" value="Alternate scaffold 14"/>
</dbReference>
<dbReference type="Proteomes" id="UP000000437">
    <property type="component" value="Chromosome 14"/>
</dbReference>
<dbReference type="GO" id="GO:0005737">
    <property type="term" value="C:cytoplasm"/>
    <property type="evidence" value="ECO:0000318"/>
    <property type="project" value="GO_Central"/>
</dbReference>
<dbReference type="GO" id="GO:0005654">
    <property type="term" value="C:nucleoplasm"/>
    <property type="evidence" value="ECO:0000318"/>
    <property type="project" value="GO_Central"/>
</dbReference>
<dbReference type="GO" id="GO:0005524">
    <property type="term" value="F:ATP binding"/>
    <property type="evidence" value="ECO:0007669"/>
    <property type="project" value="UniProtKB-KW"/>
</dbReference>
<dbReference type="GO" id="GO:0000287">
    <property type="term" value="F:magnesium ion binding"/>
    <property type="evidence" value="ECO:0007669"/>
    <property type="project" value="InterPro"/>
</dbReference>
<dbReference type="GO" id="GO:0106310">
    <property type="term" value="F:protein serine kinase activity"/>
    <property type="evidence" value="ECO:0007669"/>
    <property type="project" value="RHEA"/>
</dbReference>
<dbReference type="GO" id="GO:0004711">
    <property type="term" value="F:ribosomal protein S6 kinase activity"/>
    <property type="evidence" value="ECO:0000318"/>
    <property type="project" value="GO_Central"/>
</dbReference>
<dbReference type="GO" id="GO:0030330">
    <property type="term" value="P:DNA damage response, signal transduction by p53 class mediator"/>
    <property type="evidence" value="ECO:0000318"/>
    <property type="project" value="GO_Central"/>
</dbReference>
<dbReference type="GO" id="GO:0038202">
    <property type="term" value="P:TORC1 signaling"/>
    <property type="evidence" value="ECO:0000318"/>
    <property type="project" value="GO_Central"/>
</dbReference>
<dbReference type="CDD" id="cd14177">
    <property type="entry name" value="STKc_RSK4_C"/>
    <property type="match status" value="1"/>
</dbReference>
<dbReference type="CDD" id="cd05582">
    <property type="entry name" value="STKc_RSK_N"/>
    <property type="match status" value="1"/>
</dbReference>
<dbReference type="FunFam" id="1.10.510.10:FF:000010">
    <property type="entry name" value="Ribosomal protein S6 kinase"/>
    <property type="match status" value="1"/>
</dbReference>
<dbReference type="FunFam" id="1.10.510.10:FF:000041">
    <property type="entry name" value="Ribosomal protein S6 kinase"/>
    <property type="match status" value="1"/>
</dbReference>
<dbReference type="FunFam" id="3.30.200.20:FF:000013">
    <property type="entry name" value="Ribosomal protein S6 kinase"/>
    <property type="match status" value="1"/>
</dbReference>
<dbReference type="FunFam" id="3.30.200.20:FF:000121">
    <property type="entry name" value="Ribosomal protein S6 kinase"/>
    <property type="match status" value="1"/>
</dbReference>
<dbReference type="Gene3D" id="3.30.200.20">
    <property type="entry name" value="Phosphorylase Kinase, domain 1"/>
    <property type="match status" value="2"/>
</dbReference>
<dbReference type="Gene3D" id="1.10.510.10">
    <property type="entry name" value="Transferase(Phosphotransferase) domain 1"/>
    <property type="match status" value="2"/>
</dbReference>
<dbReference type="InterPro" id="IPR000961">
    <property type="entry name" value="AGC-kinase_C"/>
</dbReference>
<dbReference type="InterPro" id="IPR011009">
    <property type="entry name" value="Kinase-like_dom_sf"/>
</dbReference>
<dbReference type="InterPro" id="IPR017892">
    <property type="entry name" value="Pkinase_C"/>
</dbReference>
<dbReference type="InterPro" id="IPR000719">
    <property type="entry name" value="Prot_kinase_dom"/>
</dbReference>
<dbReference type="InterPro" id="IPR017441">
    <property type="entry name" value="Protein_kinase_ATP_BS"/>
</dbReference>
<dbReference type="InterPro" id="IPR016239">
    <property type="entry name" value="Ribosomal_S6_kinase_II"/>
</dbReference>
<dbReference type="InterPro" id="IPR041906">
    <property type="entry name" value="RSK_N"/>
</dbReference>
<dbReference type="InterPro" id="IPR008271">
    <property type="entry name" value="Ser/Thr_kinase_AS"/>
</dbReference>
<dbReference type="PANTHER" id="PTHR24351">
    <property type="entry name" value="RIBOSOMAL PROTEIN S6 KINASE"/>
    <property type="match status" value="1"/>
</dbReference>
<dbReference type="Pfam" id="PF00069">
    <property type="entry name" value="Pkinase"/>
    <property type="match status" value="2"/>
</dbReference>
<dbReference type="Pfam" id="PF00433">
    <property type="entry name" value="Pkinase_C"/>
    <property type="match status" value="1"/>
</dbReference>
<dbReference type="PIRSF" id="PIRSF000606">
    <property type="entry name" value="Ribsml_S6_kin_2"/>
    <property type="match status" value="1"/>
</dbReference>
<dbReference type="SMART" id="SM00133">
    <property type="entry name" value="S_TK_X"/>
    <property type="match status" value="1"/>
</dbReference>
<dbReference type="SMART" id="SM00220">
    <property type="entry name" value="S_TKc"/>
    <property type="match status" value="2"/>
</dbReference>
<dbReference type="SUPFAM" id="SSF56112">
    <property type="entry name" value="Protein kinase-like (PK-like)"/>
    <property type="match status" value="2"/>
</dbReference>
<dbReference type="PROSITE" id="PS51285">
    <property type="entry name" value="AGC_KINASE_CTER"/>
    <property type="match status" value="1"/>
</dbReference>
<dbReference type="PROSITE" id="PS00107">
    <property type="entry name" value="PROTEIN_KINASE_ATP"/>
    <property type="match status" value="2"/>
</dbReference>
<dbReference type="PROSITE" id="PS50011">
    <property type="entry name" value="PROTEIN_KINASE_DOM"/>
    <property type="match status" value="2"/>
</dbReference>
<dbReference type="PROSITE" id="PS00108">
    <property type="entry name" value="PROTEIN_KINASE_ST"/>
    <property type="match status" value="2"/>
</dbReference>
<comment type="function">
    <text evidence="1">Serine/threonine kinase that may play a role in mediating the growth-factor and stress induced activation of the transcription factor CREB.</text>
</comment>
<comment type="catalytic activity">
    <reaction>
        <text>L-seryl-[protein] + ATP = O-phospho-L-seryl-[protein] + ADP + H(+)</text>
        <dbReference type="Rhea" id="RHEA:17989"/>
        <dbReference type="Rhea" id="RHEA-COMP:9863"/>
        <dbReference type="Rhea" id="RHEA-COMP:11604"/>
        <dbReference type="ChEBI" id="CHEBI:15378"/>
        <dbReference type="ChEBI" id="CHEBI:29999"/>
        <dbReference type="ChEBI" id="CHEBI:30616"/>
        <dbReference type="ChEBI" id="CHEBI:83421"/>
        <dbReference type="ChEBI" id="CHEBI:456216"/>
        <dbReference type="EC" id="2.7.11.1"/>
    </reaction>
</comment>
<comment type="catalytic activity">
    <reaction>
        <text>L-threonyl-[protein] + ATP = O-phospho-L-threonyl-[protein] + ADP + H(+)</text>
        <dbReference type="Rhea" id="RHEA:46608"/>
        <dbReference type="Rhea" id="RHEA-COMP:11060"/>
        <dbReference type="Rhea" id="RHEA-COMP:11605"/>
        <dbReference type="ChEBI" id="CHEBI:15378"/>
        <dbReference type="ChEBI" id="CHEBI:30013"/>
        <dbReference type="ChEBI" id="CHEBI:30616"/>
        <dbReference type="ChEBI" id="CHEBI:61977"/>
        <dbReference type="ChEBI" id="CHEBI:456216"/>
        <dbReference type="EC" id="2.7.11.1"/>
    </reaction>
</comment>
<comment type="cofactor">
    <cofactor evidence="1">
        <name>Mg(2+)</name>
        <dbReference type="ChEBI" id="CHEBI:18420"/>
    </cofactor>
</comment>
<comment type="activity regulation">
    <text evidence="1">Activated by multiple phosphorylations on threonine and serine residues.</text>
</comment>
<comment type="subunit">
    <text evidence="1">Forms a complex with either ERK1 or ERK2 in quiescent cells. Transiently dissociates following mitogenic stimulation (By similarity).</text>
</comment>
<comment type="similarity">
    <text evidence="4">Belongs to the protein kinase superfamily. AGC Ser/Thr protein kinase family. S6 kinase subfamily.</text>
</comment>
<name>KS6A6_DANRE</name>
<feature type="chain" id="PRO_0000278163" description="Ribosomal protein S6 kinase alpha-6">
    <location>
        <begin position="1"/>
        <end position="740"/>
    </location>
</feature>
<feature type="domain" description="Protein kinase 1" evidence="2">
    <location>
        <begin position="67"/>
        <end position="326"/>
    </location>
</feature>
<feature type="domain" description="AGC-kinase C-terminal" evidence="3">
    <location>
        <begin position="327"/>
        <end position="396"/>
    </location>
</feature>
<feature type="domain" description="Protein kinase 2" evidence="2">
    <location>
        <begin position="420"/>
        <end position="677"/>
    </location>
</feature>
<feature type="active site" description="Proton acceptor" evidence="1">
    <location>
        <position position="192"/>
    </location>
</feature>
<feature type="active site" description="Proton acceptor" evidence="1">
    <location>
        <position position="537"/>
    </location>
</feature>
<feature type="binding site" evidence="2">
    <location>
        <begin position="73"/>
        <end position="81"/>
    </location>
    <ligand>
        <name>ATP</name>
        <dbReference type="ChEBI" id="CHEBI:30616"/>
    </ligand>
</feature>
<feature type="binding site" evidence="2">
    <location>
        <position position="99"/>
    </location>
    <ligand>
        <name>ATP</name>
        <dbReference type="ChEBI" id="CHEBI:30616"/>
    </ligand>
</feature>
<feature type="binding site" evidence="2">
    <location>
        <begin position="426"/>
        <end position="434"/>
    </location>
    <ligand>
        <name>ATP</name>
        <dbReference type="ChEBI" id="CHEBI:30616"/>
    </ligand>
</feature>
<feature type="binding site" evidence="2">
    <location>
        <position position="449"/>
    </location>
    <ligand>
        <name>ATP</name>
        <dbReference type="ChEBI" id="CHEBI:30616"/>
    </ligand>
</feature>
<reference key="1">
    <citation type="submission" date="2003-09" db="EMBL/GenBank/DDBJ databases">
        <authorList>
            <consortium name="NIH - Zebrafish Gene Collection (ZGC) project"/>
        </authorList>
    </citation>
    <scope>NUCLEOTIDE SEQUENCE [LARGE SCALE MRNA]</scope>
    <source>
        <strain>AB</strain>
    </source>
</reference>
<organism>
    <name type="scientific">Danio rerio</name>
    <name type="common">Zebrafish</name>
    <name type="synonym">Brachydanio rerio</name>
    <dbReference type="NCBI Taxonomy" id="7955"/>
    <lineage>
        <taxon>Eukaryota</taxon>
        <taxon>Metazoa</taxon>
        <taxon>Chordata</taxon>
        <taxon>Craniata</taxon>
        <taxon>Vertebrata</taxon>
        <taxon>Euteleostomi</taxon>
        <taxon>Actinopterygii</taxon>
        <taxon>Neopterygii</taxon>
        <taxon>Teleostei</taxon>
        <taxon>Ostariophysi</taxon>
        <taxon>Cypriniformes</taxon>
        <taxon>Danionidae</taxon>
        <taxon>Danioninae</taxon>
        <taxon>Danio</taxon>
    </lineage>
</organism>
<sequence>MISFGPAQESSLKMEVQSVSSEVNGHQIMDEPMEEESYTHCDEGAYKEIPITHHVKEGCEKADPSQFELLKVLGQGSFGKVFLVRKLMGPDAGQLYAMKVLKKASLKVRDRVRTKMERDILVEVNHPFIVKLHYAFQTEGKLYLILDFLRGGDVFTRLSKEVMFTEEDVKFYLAELALALDHLHNLGIVYRDLKPENILLDEAGHIKLTDFGLSKESVDQDKKAYSFCGTVEYMAPEVVNRRGHTQSADWWSLGVLMFEMLTGTLPFQGKDRNETMNMILKAKLGMPQFLSLEAQGLLRMLFKRNPSNRLGAGPDGVEEIKRHTFFSTIDWNKLYRRELQPPFKPASGKPDDTFCFDPEFTAKTPKDSPGIPPSANAHQLFKGFSFVAPVSLEESKSAPLVNILPIVQVHGSSAQFSDVYELKEDIGVGSYSICKRCIHRVTAMEFAVKIIDKSKRDPSEEIEILMRYGQHPNIITLKDVYDEGRFVYLVTELMKGGELLDKILRQKFFSEREASAVLYTITKTVDYLHCQGVVHRDLKPSNILYMDDSGNPDSIRICDFGFAKQLRGDNGLLLTPCYTANFVAPEVLMRQGYDAACDIWSLGVLLYTMLAGYTPFANGPNDTPEEILLRIGSGKFSLSGGNWDSVSDSSKDLLSHMLHVDPHHRYTAEQVLKHSWIACRDQNPHFQLTRHEAPHLVKGAMAATYSALNHKTCKPVLEPVAASSLAQRRNMKKLTSTDMS</sequence>
<gene>
    <name type="primary">rps6ka6</name>
    <name type="synonym">rps6kal</name>
</gene>